<sequence>MKSVRYLIGLFAFIACYYLLPISTRLLWQPDETRYAEISREMLASGDWIVPHLLGLRYFEKPIAGYWINSIGQWLFGANNFGVRAGVIFATLLTAALVTWFTLRLWRDKRLALLATVIYLSLFIVYAIGTYAVLDPFIAFWLVAGMCSFWLAMQAQTWRGKSAGFLLLGITCGMGVMTKGFLALAVPVLSVLPWVATQKRWKDLFIYGWLAVISCVLTVLPWGLAIAQREPNFWHYFFWVEHIQRFALDDAQHRAPFWYYVPVIIAGSLPWLGLLPGALYTGWKNRKHSATVYLLSWTIMPLLFFSVAKGKLPTYILSCFASLAMLMAHYALLAAKNNPLALRINGWINIAFGVTGIIATFVVSPWGPMNTPVWQTFESYKVFCAWSIFSLWAFFGWYTLTNVEKTWPFAALCPLGLALLVGFSIPDRVMEGKHPQFFVEMTQESLQPSRYILTDSVGVAAGLAWSLQRDDIIMYRQTGELKYGLNYPDAKGRFVSGDEFANWLNQHRQEGIITLVLSVDRDEDINSLAIPPADAIDRQERLVLIQYRPK</sequence>
<feature type="chain" id="PRO_0000380003" description="Undecaprenyl phosphate-alpha-4-amino-4-deoxy-L-arabinose arabinosyl transferase">
    <location>
        <begin position="1"/>
        <end position="550"/>
    </location>
</feature>
<feature type="transmembrane region" description="Helical" evidence="1">
    <location>
        <begin position="7"/>
        <end position="27"/>
    </location>
</feature>
<feature type="transmembrane region" description="Helical" evidence="1">
    <location>
        <begin position="81"/>
        <end position="101"/>
    </location>
</feature>
<feature type="transmembrane region" description="Helical" evidence="1">
    <location>
        <begin position="111"/>
        <end position="133"/>
    </location>
</feature>
<feature type="transmembrane region" description="Helical" evidence="1">
    <location>
        <begin position="137"/>
        <end position="154"/>
    </location>
</feature>
<feature type="transmembrane region" description="Helical" evidence="1">
    <location>
        <begin position="165"/>
        <end position="185"/>
    </location>
</feature>
<feature type="transmembrane region" description="Helical" evidence="1">
    <location>
        <begin position="204"/>
        <end position="224"/>
    </location>
</feature>
<feature type="transmembrane region" description="Helical" evidence="1">
    <location>
        <begin position="255"/>
        <end position="275"/>
    </location>
</feature>
<feature type="transmembrane region" description="Helical" evidence="1">
    <location>
        <begin position="288"/>
        <end position="308"/>
    </location>
</feature>
<feature type="transmembrane region" description="Helical" evidence="1">
    <location>
        <begin position="315"/>
        <end position="335"/>
    </location>
</feature>
<feature type="transmembrane region" description="Helical" evidence="1">
    <location>
        <begin position="346"/>
        <end position="366"/>
    </location>
</feature>
<feature type="transmembrane region" description="Helical" evidence="1">
    <location>
        <begin position="382"/>
        <end position="402"/>
    </location>
</feature>
<feature type="transmembrane region" description="Helical" evidence="1">
    <location>
        <begin position="406"/>
        <end position="426"/>
    </location>
</feature>
<evidence type="ECO:0000255" key="1">
    <source>
        <dbReference type="HAMAP-Rule" id="MF_01165"/>
    </source>
</evidence>
<accession>A8A2C4</accession>
<organism>
    <name type="scientific">Escherichia coli O9:H4 (strain HS)</name>
    <dbReference type="NCBI Taxonomy" id="331112"/>
    <lineage>
        <taxon>Bacteria</taxon>
        <taxon>Pseudomonadati</taxon>
        <taxon>Pseudomonadota</taxon>
        <taxon>Gammaproteobacteria</taxon>
        <taxon>Enterobacterales</taxon>
        <taxon>Enterobacteriaceae</taxon>
        <taxon>Escherichia</taxon>
    </lineage>
</organism>
<reference key="1">
    <citation type="journal article" date="2008" name="J. Bacteriol.">
        <title>The pangenome structure of Escherichia coli: comparative genomic analysis of E. coli commensal and pathogenic isolates.</title>
        <authorList>
            <person name="Rasko D.A."/>
            <person name="Rosovitz M.J."/>
            <person name="Myers G.S.A."/>
            <person name="Mongodin E.F."/>
            <person name="Fricke W.F."/>
            <person name="Gajer P."/>
            <person name="Crabtree J."/>
            <person name="Sebaihia M."/>
            <person name="Thomson N.R."/>
            <person name="Chaudhuri R."/>
            <person name="Henderson I.R."/>
            <person name="Sperandio V."/>
            <person name="Ravel J."/>
        </authorList>
    </citation>
    <scope>NUCLEOTIDE SEQUENCE [LARGE SCALE GENOMIC DNA]</scope>
    <source>
        <strain>HS</strain>
    </source>
</reference>
<gene>
    <name evidence="1" type="primary">arnT</name>
    <name type="ordered locus">EcHS_A2402</name>
</gene>
<proteinExistence type="inferred from homology"/>
<keyword id="KW-0997">Cell inner membrane</keyword>
<keyword id="KW-1003">Cell membrane</keyword>
<keyword id="KW-0328">Glycosyltransferase</keyword>
<keyword id="KW-0441">Lipid A biosynthesis</keyword>
<keyword id="KW-0444">Lipid biosynthesis</keyword>
<keyword id="KW-0443">Lipid metabolism</keyword>
<keyword id="KW-0448">Lipopolysaccharide biosynthesis</keyword>
<keyword id="KW-0472">Membrane</keyword>
<keyword id="KW-0808">Transferase</keyword>
<keyword id="KW-0812">Transmembrane</keyword>
<keyword id="KW-1133">Transmembrane helix</keyword>
<name>ARNT_ECOHS</name>
<dbReference type="EC" id="2.4.2.43" evidence="1"/>
<dbReference type="EMBL" id="CP000802">
    <property type="protein sequence ID" value="ABV06678.1"/>
    <property type="molecule type" value="Genomic_DNA"/>
</dbReference>
<dbReference type="RefSeq" id="WP_000844066.1">
    <property type="nucleotide sequence ID" value="NC_009800.1"/>
</dbReference>
<dbReference type="SMR" id="A8A2C4"/>
<dbReference type="CAZy" id="GT83">
    <property type="family name" value="Glycosyltransferase Family 83"/>
</dbReference>
<dbReference type="KEGG" id="ecx:EcHS_A2402"/>
<dbReference type="HOGENOM" id="CLU_019200_2_1_6"/>
<dbReference type="UniPathway" id="UPA00037"/>
<dbReference type="GO" id="GO:0005886">
    <property type="term" value="C:plasma membrane"/>
    <property type="evidence" value="ECO:0007669"/>
    <property type="project" value="UniProtKB-SubCell"/>
</dbReference>
<dbReference type="GO" id="GO:0103015">
    <property type="term" value="F:4-amino-4-deoxy-L-arabinose transferase activity"/>
    <property type="evidence" value="ECO:0007669"/>
    <property type="project" value="UniProtKB-EC"/>
</dbReference>
<dbReference type="GO" id="GO:0000030">
    <property type="term" value="F:mannosyltransferase activity"/>
    <property type="evidence" value="ECO:0007669"/>
    <property type="project" value="InterPro"/>
</dbReference>
<dbReference type="GO" id="GO:0009245">
    <property type="term" value="P:lipid A biosynthetic process"/>
    <property type="evidence" value="ECO:0007669"/>
    <property type="project" value="UniProtKB-UniRule"/>
</dbReference>
<dbReference type="GO" id="GO:0009103">
    <property type="term" value="P:lipopolysaccharide biosynthetic process"/>
    <property type="evidence" value="ECO:0007669"/>
    <property type="project" value="UniProtKB-KW"/>
</dbReference>
<dbReference type="GO" id="GO:0006493">
    <property type="term" value="P:protein O-linked glycosylation"/>
    <property type="evidence" value="ECO:0007669"/>
    <property type="project" value="InterPro"/>
</dbReference>
<dbReference type="GO" id="GO:0010041">
    <property type="term" value="P:response to iron(III) ion"/>
    <property type="evidence" value="ECO:0007669"/>
    <property type="project" value="TreeGrafter"/>
</dbReference>
<dbReference type="HAMAP" id="MF_01165">
    <property type="entry name" value="ArnT_transfer"/>
    <property type="match status" value="1"/>
</dbReference>
<dbReference type="InterPro" id="IPR022839">
    <property type="entry name" value="ArnT_tfrase"/>
</dbReference>
<dbReference type="InterPro" id="IPR003342">
    <property type="entry name" value="Glyco_trans_39/83"/>
</dbReference>
<dbReference type="InterPro" id="IPR050297">
    <property type="entry name" value="LipidA_mod_glycosyltrf_83"/>
</dbReference>
<dbReference type="NCBIfam" id="NF009784">
    <property type="entry name" value="PRK13279.1"/>
    <property type="match status" value="1"/>
</dbReference>
<dbReference type="PANTHER" id="PTHR33908">
    <property type="entry name" value="MANNOSYLTRANSFERASE YKCB-RELATED"/>
    <property type="match status" value="1"/>
</dbReference>
<dbReference type="PANTHER" id="PTHR33908:SF3">
    <property type="entry name" value="UNDECAPRENYL PHOSPHATE-ALPHA-4-AMINO-4-DEOXY-L-ARABINOSE ARABINOSYL TRANSFERASE"/>
    <property type="match status" value="1"/>
</dbReference>
<dbReference type="Pfam" id="PF02366">
    <property type="entry name" value="PMT"/>
    <property type="match status" value="1"/>
</dbReference>
<comment type="function">
    <text evidence="1">Catalyzes the transfer of the L-Ara4N moiety of the glycolipid undecaprenyl phosphate-alpha-L-Ara4N to lipid A. The modified arabinose is attached to lipid A and is required for resistance to polymyxin and cationic antimicrobial peptides.</text>
</comment>
<comment type="catalytic activity">
    <reaction evidence="1">
        <text>4-amino-4-deoxy-alpha-L-arabinopyranosyl di-trans,octa-cis-undecaprenyl phosphate + lipid IVA = lipid IIA + di-trans,octa-cis-undecaprenyl phosphate.</text>
        <dbReference type="EC" id="2.4.2.43"/>
    </reaction>
</comment>
<comment type="pathway">
    <text evidence="1">Lipopolysaccharide metabolism; 4-amino-4-deoxy-beta-L-arabinose-lipid A biosynthesis.</text>
</comment>
<comment type="subcellular location">
    <subcellularLocation>
        <location evidence="1">Cell inner membrane</location>
        <topology evidence="1">Multi-pass membrane protein</topology>
    </subcellularLocation>
</comment>
<comment type="similarity">
    <text evidence="1">Belongs to the glycosyltransferase 83 family.</text>
</comment>
<protein>
    <recommendedName>
        <fullName evidence="1">Undecaprenyl phosphate-alpha-4-amino-4-deoxy-L-arabinose arabinosyl transferase</fullName>
        <ecNumber evidence="1">2.4.2.43</ecNumber>
    </recommendedName>
    <alternativeName>
        <fullName evidence="1">4-amino-4-deoxy-L-arabinose lipid A transferase</fullName>
    </alternativeName>
    <alternativeName>
        <fullName evidence="1">Lipid IV(A) 4-amino-4-deoxy-L-arabinosyltransferase</fullName>
    </alternativeName>
    <alternativeName>
        <fullName evidence="1">Undecaprenyl phosphate-alpha-L-Ara4N transferase</fullName>
    </alternativeName>
</protein>